<gene>
    <name evidence="1" type="primary">hemL</name>
    <name type="ordered locus">RER_16660</name>
</gene>
<keyword id="KW-0963">Cytoplasm</keyword>
<keyword id="KW-0413">Isomerase</keyword>
<keyword id="KW-0627">Porphyrin biosynthesis</keyword>
<keyword id="KW-0663">Pyridoxal phosphate</keyword>
<feature type="chain" id="PRO_0000382363" description="Glutamate-1-semialdehyde 2,1-aminomutase">
    <location>
        <begin position="1"/>
        <end position="432"/>
    </location>
</feature>
<feature type="modified residue" description="N6-(pyridoxal phosphate)lysine" evidence="1">
    <location>
        <position position="267"/>
    </location>
</feature>
<protein>
    <recommendedName>
        <fullName evidence="1">Glutamate-1-semialdehyde 2,1-aminomutase</fullName>
        <shortName evidence="1">GSA</shortName>
        <ecNumber evidence="1">5.4.3.8</ecNumber>
    </recommendedName>
    <alternativeName>
        <fullName evidence="1">Glutamate-1-semialdehyde aminotransferase</fullName>
        <shortName evidence="1">GSA-AT</shortName>
    </alternativeName>
</protein>
<proteinExistence type="inferred from homology"/>
<reference key="1">
    <citation type="submission" date="2005-03" db="EMBL/GenBank/DDBJ databases">
        <title>Comparison of the complete genome sequences of Rhodococcus erythropolis PR4 and Rhodococcus opacus B4.</title>
        <authorList>
            <person name="Takarada H."/>
            <person name="Sekine M."/>
            <person name="Hosoyama A."/>
            <person name="Yamada R."/>
            <person name="Fujisawa T."/>
            <person name="Omata S."/>
            <person name="Shimizu A."/>
            <person name="Tsukatani N."/>
            <person name="Tanikawa S."/>
            <person name="Fujita N."/>
            <person name="Harayama S."/>
        </authorList>
    </citation>
    <scope>NUCLEOTIDE SEQUENCE [LARGE SCALE GENOMIC DNA]</scope>
    <source>
        <strain>PR4 / NBRC 100887</strain>
    </source>
</reference>
<evidence type="ECO:0000255" key="1">
    <source>
        <dbReference type="HAMAP-Rule" id="MF_00375"/>
    </source>
</evidence>
<dbReference type="EC" id="5.4.3.8" evidence="1"/>
<dbReference type="EMBL" id="AP008957">
    <property type="protein sequence ID" value="BAH32374.1"/>
    <property type="molecule type" value="Genomic_DNA"/>
</dbReference>
<dbReference type="SMR" id="C0ZUX9"/>
<dbReference type="KEGG" id="rer:RER_16660"/>
<dbReference type="eggNOG" id="COG0001">
    <property type="taxonomic scope" value="Bacteria"/>
</dbReference>
<dbReference type="HOGENOM" id="CLU_016922_1_5_11"/>
<dbReference type="UniPathway" id="UPA00251">
    <property type="reaction ID" value="UER00317"/>
</dbReference>
<dbReference type="Proteomes" id="UP000002204">
    <property type="component" value="Chromosome"/>
</dbReference>
<dbReference type="GO" id="GO:0005737">
    <property type="term" value="C:cytoplasm"/>
    <property type="evidence" value="ECO:0007669"/>
    <property type="project" value="UniProtKB-SubCell"/>
</dbReference>
<dbReference type="GO" id="GO:0042286">
    <property type="term" value="F:glutamate-1-semialdehyde 2,1-aminomutase activity"/>
    <property type="evidence" value="ECO:0007669"/>
    <property type="project" value="UniProtKB-UniRule"/>
</dbReference>
<dbReference type="GO" id="GO:0030170">
    <property type="term" value="F:pyridoxal phosphate binding"/>
    <property type="evidence" value="ECO:0007669"/>
    <property type="project" value="InterPro"/>
</dbReference>
<dbReference type="GO" id="GO:0008483">
    <property type="term" value="F:transaminase activity"/>
    <property type="evidence" value="ECO:0007669"/>
    <property type="project" value="InterPro"/>
</dbReference>
<dbReference type="GO" id="GO:0006782">
    <property type="term" value="P:protoporphyrinogen IX biosynthetic process"/>
    <property type="evidence" value="ECO:0007669"/>
    <property type="project" value="UniProtKB-UniRule"/>
</dbReference>
<dbReference type="CDD" id="cd00610">
    <property type="entry name" value="OAT_like"/>
    <property type="match status" value="1"/>
</dbReference>
<dbReference type="FunFam" id="3.40.640.10:FF:000021">
    <property type="entry name" value="Glutamate-1-semialdehyde 2,1-aminomutase"/>
    <property type="match status" value="1"/>
</dbReference>
<dbReference type="Gene3D" id="3.90.1150.10">
    <property type="entry name" value="Aspartate Aminotransferase, domain 1"/>
    <property type="match status" value="1"/>
</dbReference>
<dbReference type="Gene3D" id="3.40.640.10">
    <property type="entry name" value="Type I PLP-dependent aspartate aminotransferase-like (Major domain)"/>
    <property type="match status" value="1"/>
</dbReference>
<dbReference type="HAMAP" id="MF_00375">
    <property type="entry name" value="HemL_aminotrans_3"/>
    <property type="match status" value="1"/>
</dbReference>
<dbReference type="InterPro" id="IPR004639">
    <property type="entry name" value="4pyrrol_synth_GluAld_NH2Trfase"/>
</dbReference>
<dbReference type="InterPro" id="IPR005814">
    <property type="entry name" value="Aminotrans_3"/>
</dbReference>
<dbReference type="InterPro" id="IPR049704">
    <property type="entry name" value="Aminotrans_3_PPA_site"/>
</dbReference>
<dbReference type="InterPro" id="IPR015424">
    <property type="entry name" value="PyrdxlP-dep_Trfase"/>
</dbReference>
<dbReference type="InterPro" id="IPR015421">
    <property type="entry name" value="PyrdxlP-dep_Trfase_major"/>
</dbReference>
<dbReference type="InterPro" id="IPR015422">
    <property type="entry name" value="PyrdxlP-dep_Trfase_small"/>
</dbReference>
<dbReference type="NCBIfam" id="TIGR00713">
    <property type="entry name" value="hemL"/>
    <property type="match status" value="1"/>
</dbReference>
<dbReference type="NCBIfam" id="NF000818">
    <property type="entry name" value="PRK00062.1"/>
    <property type="match status" value="1"/>
</dbReference>
<dbReference type="PANTHER" id="PTHR43713">
    <property type="entry name" value="GLUTAMATE-1-SEMIALDEHYDE 2,1-AMINOMUTASE"/>
    <property type="match status" value="1"/>
</dbReference>
<dbReference type="PANTHER" id="PTHR43713:SF3">
    <property type="entry name" value="GLUTAMATE-1-SEMIALDEHYDE 2,1-AMINOMUTASE 1, CHLOROPLASTIC-RELATED"/>
    <property type="match status" value="1"/>
</dbReference>
<dbReference type="Pfam" id="PF00202">
    <property type="entry name" value="Aminotran_3"/>
    <property type="match status" value="1"/>
</dbReference>
<dbReference type="SUPFAM" id="SSF53383">
    <property type="entry name" value="PLP-dependent transferases"/>
    <property type="match status" value="1"/>
</dbReference>
<dbReference type="PROSITE" id="PS00600">
    <property type="entry name" value="AA_TRANSFER_CLASS_3"/>
    <property type="match status" value="1"/>
</dbReference>
<name>GSA_RHOE4</name>
<sequence length="432" mass="44563">MHATNSARLFERAGNVIPGGVNSPVRAFGSVGGTPRFIREASGYTLTDVDGNNYVDLVSSWGPMILGHAHPAVVEAVREAALGGLSFGAPTEGEVALAEEIVARVAPVEKVRLVNSGTEATMSAVRLARGFTGRTKIIKFSGCYHGHVDALLADAGSGLATFGLPTSPGVTGAQAEDTIVVRYNDLDAVAAAFAANPGAIACVITEAAAGNMGAVAPLPGFNEGLRRLTREHGALLIMDEVMTGFRVSASGWYGIDNVAGDLYTFGKVMSGGLPAAAFGGRADIMGHLAPDGPVYQAGTLSGNPVAVAAGLASLRAADAEVYAKLGRNATALGDLMTQALTAEGVEHRVQYAGTLVSVFFTENTVTNYDEAKAAQTWRFPAFFHALLSRGVYPPPSAFEAWFVSAALDDRAFSIIADAMPHAAKAAAAAVKP</sequence>
<accession>C0ZUX9</accession>
<organism>
    <name type="scientific">Rhodococcus erythropolis (strain PR4 / NBRC 100887)</name>
    <dbReference type="NCBI Taxonomy" id="234621"/>
    <lineage>
        <taxon>Bacteria</taxon>
        <taxon>Bacillati</taxon>
        <taxon>Actinomycetota</taxon>
        <taxon>Actinomycetes</taxon>
        <taxon>Mycobacteriales</taxon>
        <taxon>Nocardiaceae</taxon>
        <taxon>Rhodococcus</taxon>
        <taxon>Rhodococcus erythropolis group</taxon>
    </lineage>
</organism>
<comment type="catalytic activity">
    <reaction evidence="1">
        <text>(S)-4-amino-5-oxopentanoate = 5-aminolevulinate</text>
        <dbReference type="Rhea" id="RHEA:14265"/>
        <dbReference type="ChEBI" id="CHEBI:57501"/>
        <dbReference type="ChEBI" id="CHEBI:356416"/>
        <dbReference type="EC" id="5.4.3.8"/>
    </reaction>
</comment>
<comment type="cofactor">
    <cofactor evidence="1">
        <name>pyridoxal 5'-phosphate</name>
        <dbReference type="ChEBI" id="CHEBI:597326"/>
    </cofactor>
</comment>
<comment type="pathway">
    <text evidence="1">Porphyrin-containing compound metabolism; protoporphyrin-IX biosynthesis; 5-aminolevulinate from L-glutamyl-tRNA(Glu): step 2/2.</text>
</comment>
<comment type="subunit">
    <text evidence="1">Homodimer.</text>
</comment>
<comment type="subcellular location">
    <subcellularLocation>
        <location evidence="1">Cytoplasm</location>
    </subcellularLocation>
</comment>
<comment type="similarity">
    <text evidence="1">Belongs to the class-III pyridoxal-phosphate-dependent aminotransferase family. HemL subfamily.</text>
</comment>